<comment type="interaction">
    <interactant intactId="EBI-13309213">
        <id>Q8N1E2</id>
    </interactant>
    <interactant intactId="EBI-466029">
        <id>P42858</id>
        <label>HTT</label>
    </interactant>
    <organismsDiffer>false</organismsDiffer>
    <experiments>3</experiments>
</comment>
<comment type="interaction">
    <interactant intactId="EBI-13309213">
        <id>Q8N1E2</id>
    </interactant>
    <interactant intactId="EBI-11724423">
        <id>Q7Z7N9</id>
        <label>TMEM179B</label>
    </interactant>
    <organismsDiffer>false</organismsDiffer>
    <experiments>3</experiments>
</comment>
<comment type="interaction">
    <interactant intactId="EBI-13309213">
        <id>Q8N1E2</id>
    </interactant>
    <interactant intactId="EBI-10191303">
        <id>O95231</id>
        <label>VENTX</label>
    </interactant>
    <organismsDiffer>false</organismsDiffer>
    <experiments>3</experiments>
</comment>
<comment type="subcellular location">
    <subcellularLocation>
        <location evidence="3">Secreted</location>
    </subcellularLocation>
</comment>
<comment type="similarity">
    <text evidence="3">Belongs to the glycosyl hydrolase 23 family.</text>
</comment>
<feature type="signal peptide" evidence="2">
    <location>
        <begin position="1"/>
        <end position="19"/>
    </location>
</feature>
<feature type="chain" id="PRO_0000012023" description="Lysozyme g-like protein 1">
    <location>
        <begin position="20"/>
        <end position="194"/>
    </location>
</feature>
<feature type="disulfide bond" evidence="1">
    <location>
        <begin position="24"/>
        <end position="80"/>
    </location>
</feature>
<feature type="disulfide bond" evidence="1">
    <location>
        <begin position="38"/>
        <end position="49"/>
    </location>
</feature>
<proteinExistence type="evidence at protein level"/>
<gene>
    <name type="primary">LYG1</name>
    <name type="ORF">UNQ1939/PRO4422</name>
</gene>
<sequence length="194" mass="21431">MSALWLLLGLLALMDLSESSNWGCYGNIQSLDTPGASCGIGRRHGLNYCGVRASERLAEIDMPYLLKYQPMMQTIGQKYCMDPAVIAGVLSRKSPGDKILVNMGDRTSMVQDPGSQAPTSWISESQVSQTTEVLTTRIKEIQRRFPTWTPDQYLRGGLCAYSGGAGYVRSSQDLSCDFCNDVLARAKYLKRHGF</sequence>
<evidence type="ECO:0000250" key="1"/>
<evidence type="ECO:0000255" key="2"/>
<evidence type="ECO:0000305" key="3"/>
<dbReference type="EC" id="3.2.1.-"/>
<dbReference type="EMBL" id="AY358988">
    <property type="protein sequence ID" value="AAQ89347.1"/>
    <property type="molecule type" value="mRNA"/>
</dbReference>
<dbReference type="EMBL" id="AC079447">
    <property type="protein sequence ID" value="AAX93256.1"/>
    <property type="molecule type" value="Genomic_DNA"/>
</dbReference>
<dbReference type="EMBL" id="CH471127">
    <property type="protein sequence ID" value="EAX01872.1"/>
    <property type="molecule type" value="Genomic_DNA"/>
</dbReference>
<dbReference type="EMBL" id="BC029126">
    <property type="protein sequence ID" value="AAH29126.1"/>
    <property type="molecule type" value="mRNA"/>
</dbReference>
<dbReference type="CCDS" id="CCDS2043.1"/>
<dbReference type="RefSeq" id="NP_001358309.1">
    <property type="nucleotide sequence ID" value="NM_001371380.1"/>
</dbReference>
<dbReference type="RefSeq" id="NP_777558.1">
    <property type="nucleotide sequence ID" value="NM_174898.3"/>
</dbReference>
<dbReference type="RefSeq" id="XP_005263926.1">
    <property type="nucleotide sequence ID" value="XM_005263869.2"/>
</dbReference>
<dbReference type="RefSeq" id="XP_005263927.1">
    <property type="nucleotide sequence ID" value="XM_005263870.3"/>
</dbReference>
<dbReference type="RefSeq" id="XP_005263928.1">
    <property type="nucleotide sequence ID" value="XM_005263871.4"/>
</dbReference>
<dbReference type="RefSeq" id="XP_011508882.1">
    <property type="nucleotide sequence ID" value="XM_011510580.2"/>
</dbReference>
<dbReference type="RefSeq" id="XP_016858800.1">
    <property type="nucleotide sequence ID" value="XM_017003311.1"/>
</dbReference>
<dbReference type="RefSeq" id="XP_016858801.1">
    <property type="nucleotide sequence ID" value="XM_017003312.1"/>
</dbReference>
<dbReference type="RefSeq" id="XP_016858802.1">
    <property type="nucleotide sequence ID" value="XM_017003313.1"/>
</dbReference>
<dbReference type="RefSeq" id="XP_047299230.1">
    <property type="nucleotide sequence ID" value="XM_047443274.1"/>
</dbReference>
<dbReference type="RefSeq" id="XP_047299231.1">
    <property type="nucleotide sequence ID" value="XM_047443275.1"/>
</dbReference>
<dbReference type="RefSeq" id="XP_054196452.1">
    <property type="nucleotide sequence ID" value="XM_054340477.1"/>
</dbReference>
<dbReference type="RefSeq" id="XP_054196453.1">
    <property type="nucleotide sequence ID" value="XM_054340478.1"/>
</dbReference>
<dbReference type="RefSeq" id="XP_054196454.1">
    <property type="nucleotide sequence ID" value="XM_054340479.1"/>
</dbReference>
<dbReference type="SMR" id="Q8N1E2"/>
<dbReference type="BioGRID" id="126196">
    <property type="interactions" value="4"/>
</dbReference>
<dbReference type="FunCoup" id="Q8N1E2">
    <property type="interactions" value="9"/>
</dbReference>
<dbReference type="IntAct" id="Q8N1E2">
    <property type="interactions" value="4"/>
</dbReference>
<dbReference type="STRING" id="9606.ENSP00000386923"/>
<dbReference type="CAZy" id="GH23">
    <property type="family name" value="Glycoside Hydrolase Family 23"/>
</dbReference>
<dbReference type="iPTMnet" id="Q8N1E2"/>
<dbReference type="PhosphoSitePlus" id="Q8N1E2"/>
<dbReference type="BioMuta" id="LYG1"/>
<dbReference type="DMDM" id="47117245"/>
<dbReference type="jPOST" id="Q8N1E2"/>
<dbReference type="PaxDb" id="9606-ENSP00000386923"/>
<dbReference type="Antibodypedia" id="32811">
    <property type="antibodies" value="35 antibodies from 10 providers"/>
</dbReference>
<dbReference type="DNASU" id="129530"/>
<dbReference type="Ensembl" id="ENST00000308528.9">
    <property type="protein sequence ID" value="ENSP00000311320.4"/>
    <property type="gene ID" value="ENSG00000144214.10"/>
</dbReference>
<dbReference type="Ensembl" id="ENST00000409448.1">
    <property type="protein sequence ID" value="ENSP00000386923.1"/>
    <property type="gene ID" value="ENSG00000144214.10"/>
</dbReference>
<dbReference type="GeneID" id="129530"/>
<dbReference type="KEGG" id="hsa:129530"/>
<dbReference type="MANE-Select" id="ENST00000308528.9">
    <property type="protein sequence ID" value="ENSP00000311320.4"/>
    <property type="RefSeq nucleotide sequence ID" value="NM_174898.3"/>
    <property type="RefSeq protein sequence ID" value="NP_777558.1"/>
</dbReference>
<dbReference type="UCSC" id="uc002szy.3">
    <property type="organism name" value="human"/>
</dbReference>
<dbReference type="AGR" id="HGNC:27014"/>
<dbReference type="CTD" id="129530"/>
<dbReference type="DisGeNET" id="129530"/>
<dbReference type="GeneCards" id="LYG1"/>
<dbReference type="HGNC" id="HGNC:27014">
    <property type="gene designation" value="LYG1"/>
</dbReference>
<dbReference type="HPA" id="ENSG00000144214">
    <property type="expression patterns" value="Tissue enriched (kidney)"/>
</dbReference>
<dbReference type="MIM" id="621066">
    <property type="type" value="gene"/>
</dbReference>
<dbReference type="neXtProt" id="NX_Q8N1E2"/>
<dbReference type="PharmGKB" id="PA162394698"/>
<dbReference type="VEuPathDB" id="HostDB:ENSG00000144214"/>
<dbReference type="eggNOG" id="ENOG502RZXI">
    <property type="taxonomic scope" value="Eukaryota"/>
</dbReference>
<dbReference type="GeneTree" id="ENSGT00390000017614"/>
<dbReference type="HOGENOM" id="CLU_089081_1_0_1"/>
<dbReference type="InParanoid" id="Q8N1E2"/>
<dbReference type="OMA" id="SHAPTSW"/>
<dbReference type="OrthoDB" id="10021790at2759"/>
<dbReference type="PAN-GO" id="Q8N1E2">
    <property type="GO annotations" value="3 GO annotations based on evolutionary models"/>
</dbReference>
<dbReference type="PhylomeDB" id="Q8N1E2"/>
<dbReference type="TreeFam" id="TF329826"/>
<dbReference type="PathwayCommons" id="Q8N1E2"/>
<dbReference type="SignaLink" id="Q8N1E2"/>
<dbReference type="BioGRID-ORCS" id="129530">
    <property type="hits" value="10 hits in 1147 CRISPR screens"/>
</dbReference>
<dbReference type="ChiTaRS" id="LYG1">
    <property type="organism name" value="human"/>
</dbReference>
<dbReference type="GenomeRNAi" id="129530"/>
<dbReference type="Pharos" id="Q8N1E2">
    <property type="development level" value="Tdark"/>
</dbReference>
<dbReference type="PRO" id="PR:Q8N1E2"/>
<dbReference type="Proteomes" id="UP000005640">
    <property type="component" value="Chromosome 2"/>
</dbReference>
<dbReference type="RNAct" id="Q8N1E2">
    <property type="molecule type" value="protein"/>
</dbReference>
<dbReference type="Bgee" id="ENSG00000144214">
    <property type="expression patterns" value="Expressed in kidney epithelium and 106 other cell types or tissues"/>
</dbReference>
<dbReference type="GO" id="GO:0005576">
    <property type="term" value="C:extracellular region"/>
    <property type="evidence" value="ECO:0000318"/>
    <property type="project" value="GO_Central"/>
</dbReference>
<dbReference type="GO" id="GO:0003796">
    <property type="term" value="F:lysozyme activity"/>
    <property type="evidence" value="ECO:0000318"/>
    <property type="project" value="GO_Central"/>
</dbReference>
<dbReference type="GO" id="GO:0050830">
    <property type="term" value="P:defense response to Gram-positive bacterium"/>
    <property type="evidence" value="ECO:0000318"/>
    <property type="project" value="GO_Central"/>
</dbReference>
<dbReference type="GO" id="GO:0009253">
    <property type="term" value="P:peptidoglycan catabolic process"/>
    <property type="evidence" value="ECO:0007669"/>
    <property type="project" value="InterPro"/>
</dbReference>
<dbReference type="CDD" id="cd16888">
    <property type="entry name" value="lyz_G-like_1"/>
    <property type="match status" value="1"/>
</dbReference>
<dbReference type="FunFam" id="1.10.530.10:FF:000022">
    <property type="entry name" value="Lysozyme g-like protein"/>
    <property type="match status" value="1"/>
</dbReference>
<dbReference type="Gene3D" id="1.10.530.10">
    <property type="match status" value="1"/>
</dbReference>
<dbReference type="InterPro" id="IPR002152">
    <property type="entry name" value="Glyco_hydro_23"/>
</dbReference>
<dbReference type="InterPro" id="IPR023346">
    <property type="entry name" value="Lysozyme-like_dom_sf"/>
</dbReference>
<dbReference type="PANTHER" id="PTHR31698">
    <property type="entry name" value="LYSOZYME G FAMILY MEMBER"/>
    <property type="match status" value="1"/>
</dbReference>
<dbReference type="PANTHER" id="PTHR31698:SF5">
    <property type="entry name" value="LYSOZYME G-LIKE PROTEIN 1"/>
    <property type="match status" value="1"/>
</dbReference>
<dbReference type="PIRSF" id="PIRSF001065">
    <property type="entry name" value="Lysozyme_g"/>
    <property type="match status" value="1"/>
</dbReference>
<dbReference type="PRINTS" id="PR00749">
    <property type="entry name" value="LYSOZYMEG"/>
</dbReference>
<dbReference type="SUPFAM" id="SSF53955">
    <property type="entry name" value="Lysozyme-like"/>
    <property type="match status" value="1"/>
</dbReference>
<keyword id="KW-1015">Disulfide bond</keyword>
<keyword id="KW-0326">Glycosidase</keyword>
<keyword id="KW-0378">Hydrolase</keyword>
<keyword id="KW-1185">Reference proteome</keyword>
<keyword id="KW-0964">Secreted</keyword>
<keyword id="KW-0732">Signal</keyword>
<reference key="1">
    <citation type="journal article" date="2003" name="J. Mol. Evol.">
        <title>Molecular evolution of vertebrate goose-type lysozyme genes.</title>
        <authorList>
            <person name="Irwin D.M."/>
            <person name="Gong Z."/>
        </authorList>
    </citation>
    <scope>NUCLEOTIDE SEQUENCE [MRNA]</scope>
</reference>
<reference key="2">
    <citation type="journal article" date="2003" name="Genome Res.">
        <title>The secreted protein discovery initiative (SPDI), a large-scale effort to identify novel human secreted and transmembrane proteins: a bioinformatics assessment.</title>
        <authorList>
            <person name="Clark H.F."/>
            <person name="Gurney A.L."/>
            <person name="Abaya E."/>
            <person name="Baker K."/>
            <person name="Baldwin D.T."/>
            <person name="Brush J."/>
            <person name="Chen J."/>
            <person name="Chow B."/>
            <person name="Chui C."/>
            <person name="Crowley C."/>
            <person name="Currell B."/>
            <person name="Deuel B."/>
            <person name="Dowd P."/>
            <person name="Eaton D."/>
            <person name="Foster J.S."/>
            <person name="Grimaldi C."/>
            <person name="Gu Q."/>
            <person name="Hass P.E."/>
            <person name="Heldens S."/>
            <person name="Huang A."/>
            <person name="Kim H.S."/>
            <person name="Klimowski L."/>
            <person name="Jin Y."/>
            <person name="Johnson S."/>
            <person name="Lee J."/>
            <person name="Lewis L."/>
            <person name="Liao D."/>
            <person name="Mark M.R."/>
            <person name="Robbie E."/>
            <person name="Sanchez C."/>
            <person name="Schoenfeld J."/>
            <person name="Seshagiri S."/>
            <person name="Simmons L."/>
            <person name="Singh J."/>
            <person name="Smith V."/>
            <person name="Stinson J."/>
            <person name="Vagts A."/>
            <person name="Vandlen R.L."/>
            <person name="Watanabe C."/>
            <person name="Wieand D."/>
            <person name="Woods K."/>
            <person name="Xie M.-H."/>
            <person name="Yansura D.G."/>
            <person name="Yi S."/>
            <person name="Yu G."/>
            <person name="Yuan J."/>
            <person name="Zhang M."/>
            <person name="Zhang Z."/>
            <person name="Goddard A.D."/>
            <person name="Wood W.I."/>
            <person name="Godowski P.J."/>
            <person name="Gray A.M."/>
        </authorList>
    </citation>
    <scope>NUCLEOTIDE SEQUENCE [LARGE SCALE MRNA]</scope>
</reference>
<reference key="3">
    <citation type="journal article" date="2005" name="Nature">
        <title>Generation and annotation of the DNA sequences of human chromosomes 2 and 4.</title>
        <authorList>
            <person name="Hillier L.W."/>
            <person name="Graves T.A."/>
            <person name="Fulton R.S."/>
            <person name="Fulton L.A."/>
            <person name="Pepin K.H."/>
            <person name="Minx P."/>
            <person name="Wagner-McPherson C."/>
            <person name="Layman D."/>
            <person name="Wylie K."/>
            <person name="Sekhon M."/>
            <person name="Becker M.C."/>
            <person name="Fewell G.A."/>
            <person name="Delehaunty K.D."/>
            <person name="Miner T.L."/>
            <person name="Nash W.E."/>
            <person name="Kremitzki C."/>
            <person name="Oddy L."/>
            <person name="Du H."/>
            <person name="Sun H."/>
            <person name="Bradshaw-Cordum H."/>
            <person name="Ali J."/>
            <person name="Carter J."/>
            <person name="Cordes M."/>
            <person name="Harris A."/>
            <person name="Isak A."/>
            <person name="van Brunt A."/>
            <person name="Nguyen C."/>
            <person name="Du F."/>
            <person name="Courtney L."/>
            <person name="Kalicki J."/>
            <person name="Ozersky P."/>
            <person name="Abbott S."/>
            <person name="Armstrong J."/>
            <person name="Belter E.A."/>
            <person name="Caruso L."/>
            <person name="Cedroni M."/>
            <person name="Cotton M."/>
            <person name="Davidson T."/>
            <person name="Desai A."/>
            <person name="Elliott G."/>
            <person name="Erb T."/>
            <person name="Fronick C."/>
            <person name="Gaige T."/>
            <person name="Haakenson W."/>
            <person name="Haglund K."/>
            <person name="Holmes A."/>
            <person name="Harkins R."/>
            <person name="Kim K."/>
            <person name="Kruchowski S.S."/>
            <person name="Strong C.M."/>
            <person name="Grewal N."/>
            <person name="Goyea E."/>
            <person name="Hou S."/>
            <person name="Levy A."/>
            <person name="Martinka S."/>
            <person name="Mead K."/>
            <person name="McLellan M.D."/>
            <person name="Meyer R."/>
            <person name="Randall-Maher J."/>
            <person name="Tomlinson C."/>
            <person name="Dauphin-Kohlberg S."/>
            <person name="Kozlowicz-Reilly A."/>
            <person name="Shah N."/>
            <person name="Swearengen-Shahid S."/>
            <person name="Snider J."/>
            <person name="Strong J.T."/>
            <person name="Thompson J."/>
            <person name="Yoakum M."/>
            <person name="Leonard S."/>
            <person name="Pearman C."/>
            <person name="Trani L."/>
            <person name="Radionenko M."/>
            <person name="Waligorski J.E."/>
            <person name="Wang C."/>
            <person name="Rock S.M."/>
            <person name="Tin-Wollam A.-M."/>
            <person name="Maupin R."/>
            <person name="Latreille P."/>
            <person name="Wendl M.C."/>
            <person name="Yang S.-P."/>
            <person name="Pohl C."/>
            <person name="Wallis J.W."/>
            <person name="Spieth J."/>
            <person name="Bieri T.A."/>
            <person name="Berkowicz N."/>
            <person name="Nelson J.O."/>
            <person name="Osborne J."/>
            <person name="Ding L."/>
            <person name="Meyer R."/>
            <person name="Sabo A."/>
            <person name="Shotland Y."/>
            <person name="Sinha P."/>
            <person name="Wohldmann P.E."/>
            <person name="Cook L.L."/>
            <person name="Hickenbotham M.T."/>
            <person name="Eldred J."/>
            <person name="Williams D."/>
            <person name="Jones T.A."/>
            <person name="She X."/>
            <person name="Ciccarelli F.D."/>
            <person name="Izaurralde E."/>
            <person name="Taylor J."/>
            <person name="Schmutz J."/>
            <person name="Myers R.M."/>
            <person name="Cox D.R."/>
            <person name="Huang X."/>
            <person name="McPherson J.D."/>
            <person name="Mardis E.R."/>
            <person name="Clifton S.W."/>
            <person name="Warren W.C."/>
            <person name="Chinwalla A.T."/>
            <person name="Eddy S.R."/>
            <person name="Marra M.A."/>
            <person name="Ovcharenko I."/>
            <person name="Furey T.S."/>
            <person name="Miller W."/>
            <person name="Eichler E.E."/>
            <person name="Bork P."/>
            <person name="Suyama M."/>
            <person name="Torrents D."/>
            <person name="Waterston R.H."/>
            <person name="Wilson R.K."/>
        </authorList>
    </citation>
    <scope>NUCLEOTIDE SEQUENCE [LARGE SCALE GENOMIC DNA]</scope>
</reference>
<reference key="4">
    <citation type="submission" date="2005-09" db="EMBL/GenBank/DDBJ databases">
        <authorList>
            <person name="Mural R.J."/>
            <person name="Istrail S."/>
            <person name="Sutton G.G."/>
            <person name="Florea L."/>
            <person name="Halpern A.L."/>
            <person name="Mobarry C.M."/>
            <person name="Lippert R."/>
            <person name="Walenz B."/>
            <person name="Shatkay H."/>
            <person name="Dew I."/>
            <person name="Miller J.R."/>
            <person name="Flanigan M.J."/>
            <person name="Edwards N.J."/>
            <person name="Bolanos R."/>
            <person name="Fasulo D."/>
            <person name="Halldorsson B.V."/>
            <person name="Hannenhalli S."/>
            <person name="Turner R."/>
            <person name="Yooseph S."/>
            <person name="Lu F."/>
            <person name="Nusskern D.R."/>
            <person name="Shue B.C."/>
            <person name="Zheng X.H."/>
            <person name="Zhong F."/>
            <person name="Delcher A.L."/>
            <person name="Huson D.H."/>
            <person name="Kravitz S.A."/>
            <person name="Mouchard L."/>
            <person name="Reinert K."/>
            <person name="Remington K.A."/>
            <person name="Clark A.G."/>
            <person name="Waterman M.S."/>
            <person name="Eichler E.E."/>
            <person name="Adams M.D."/>
            <person name="Hunkapiller M.W."/>
            <person name="Myers E.W."/>
            <person name="Venter J.C."/>
        </authorList>
    </citation>
    <scope>NUCLEOTIDE SEQUENCE [LARGE SCALE GENOMIC DNA]</scope>
</reference>
<reference key="5">
    <citation type="journal article" date="2004" name="Genome Res.">
        <title>The status, quality, and expansion of the NIH full-length cDNA project: the Mammalian Gene Collection (MGC).</title>
        <authorList>
            <consortium name="The MGC Project Team"/>
        </authorList>
    </citation>
    <scope>NUCLEOTIDE SEQUENCE [LARGE SCALE MRNA]</scope>
    <source>
        <tissue>Colon</tissue>
        <tissue>Kidney</tissue>
    </source>
</reference>
<protein>
    <recommendedName>
        <fullName>Lysozyme g-like protein 1</fullName>
        <ecNumber>3.2.1.-</ecNumber>
    </recommendedName>
</protein>
<organism>
    <name type="scientific">Homo sapiens</name>
    <name type="common">Human</name>
    <dbReference type="NCBI Taxonomy" id="9606"/>
    <lineage>
        <taxon>Eukaryota</taxon>
        <taxon>Metazoa</taxon>
        <taxon>Chordata</taxon>
        <taxon>Craniata</taxon>
        <taxon>Vertebrata</taxon>
        <taxon>Euteleostomi</taxon>
        <taxon>Mammalia</taxon>
        <taxon>Eutheria</taxon>
        <taxon>Euarchontoglires</taxon>
        <taxon>Primates</taxon>
        <taxon>Haplorrhini</taxon>
        <taxon>Catarrhini</taxon>
        <taxon>Hominidae</taxon>
        <taxon>Homo</taxon>
    </lineage>
</organism>
<accession>Q8N1E2</accession>
<accession>Q53RV9</accession>
<name>LYG1_HUMAN</name>